<evidence type="ECO:0000250" key="1">
    <source>
        <dbReference type="UniProtKB" id="Q07878"/>
    </source>
</evidence>
<evidence type="ECO:0000250" key="2">
    <source>
        <dbReference type="UniProtKB" id="Q5H8C4"/>
    </source>
</evidence>
<evidence type="ECO:0000255" key="3"/>
<evidence type="ECO:0000269" key="4">
    <source>
    </source>
</evidence>
<evidence type="ECO:0000269" key="5">
    <source>
    </source>
</evidence>
<evidence type="ECO:0000269" key="6">
    <source>
    </source>
</evidence>
<evidence type="ECO:0000269" key="7">
    <source>
    </source>
</evidence>
<evidence type="ECO:0000269" key="8">
    <source>
    </source>
</evidence>
<evidence type="ECO:0000269" key="9">
    <source>
    </source>
</evidence>
<evidence type="ECO:0000269" key="10">
    <source>
    </source>
</evidence>
<evidence type="ECO:0000269" key="11">
    <source>
    </source>
</evidence>
<evidence type="ECO:0000269" key="12">
    <source>
    </source>
</evidence>
<evidence type="ECO:0000269" key="13">
    <source>
    </source>
</evidence>
<evidence type="ECO:0000269" key="14">
    <source>
    </source>
</evidence>
<evidence type="ECO:0000269" key="15">
    <source>
    </source>
</evidence>
<evidence type="ECO:0000303" key="16">
    <source>
    </source>
</evidence>
<evidence type="ECO:0000303" key="17">
    <source>
    </source>
</evidence>
<evidence type="ECO:0000303" key="18">
    <source>
    </source>
</evidence>
<evidence type="ECO:0000303" key="19">
    <source>
    </source>
</evidence>
<evidence type="ECO:0000303" key="20">
    <source>
    </source>
</evidence>
<evidence type="ECO:0000303" key="21">
    <source>
    </source>
</evidence>
<evidence type="ECO:0000305" key="22"/>
<evidence type="ECO:0007744" key="23">
    <source>
    </source>
</evidence>
<dbReference type="EMBL" id="AF337532">
    <property type="protein sequence ID" value="AAK61861.1"/>
    <property type="molecule type" value="mRNA"/>
</dbReference>
<dbReference type="EMBL" id="AB054005">
    <property type="protein sequence ID" value="BAB59128.1"/>
    <property type="molecule type" value="mRNA"/>
</dbReference>
<dbReference type="EMBL" id="AJ608769">
    <property type="protein sequence ID" value="CAE75581.1"/>
    <property type="molecule type" value="mRNA"/>
</dbReference>
<dbReference type="EMBL" id="AJ626859">
    <property type="protein sequence ID" value="CAF25186.1"/>
    <property type="molecule type" value="mRNA"/>
</dbReference>
<dbReference type="EMBL" id="AL158159">
    <property type="status" value="NOT_ANNOTATED_CDS"/>
    <property type="molecule type" value="Genomic_DNA"/>
</dbReference>
<dbReference type="EMBL" id="AL353710">
    <property type="status" value="NOT_ANNOTATED_CDS"/>
    <property type="molecule type" value="Genomic_DNA"/>
</dbReference>
<dbReference type="EMBL" id="AL359204">
    <property type="status" value="NOT_ANNOTATED_CDS"/>
    <property type="molecule type" value="Genomic_DNA"/>
</dbReference>
<dbReference type="EMBL" id="AB023203">
    <property type="protein sequence ID" value="BAA76830.1"/>
    <property type="molecule type" value="mRNA"/>
</dbReference>
<dbReference type="EMBL" id="BC020576">
    <property type="protein sequence ID" value="AAH20576.1"/>
    <property type="status" value="ALT_SEQ"/>
    <property type="molecule type" value="mRNA"/>
</dbReference>
<dbReference type="EMBL" id="BC041852">
    <property type="protein sequence ID" value="AAH41852.1"/>
    <property type="molecule type" value="mRNA"/>
</dbReference>
<dbReference type="EMBL" id="AK022967">
    <property type="protein sequence ID" value="BAB14337.1"/>
    <property type="molecule type" value="mRNA"/>
</dbReference>
<dbReference type="CCDS" id="CCDS47983.1">
    <molecule id="Q96RL7-4"/>
</dbReference>
<dbReference type="CCDS" id="CCDS55321.1">
    <molecule id="Q96RL7-3"/>
</dbReference>
<dbReference type="CCDS" id="CCDS6655.1">
    <molecule id="Q96RL7-1"/>
</dbReference>
<dbReference type="CCDS" id="CCDS6656.1">
    <molecule id="Q96RL7-2"/>
</dbReference>
<dbReference type="RefSeq" id="NP_001018047.1">
    <molecule id="Q96RL7-3"/>
    <property type="nucleotide sequence ID" value="NM_001018037.2"/>
</dbReference>
<dbReference type="RefSeq" id="NP_001018048.1">
    <molecule id="Q96RL7-4"/>
    <property type="nucleotide sequence ID" value="NM_001018038.3"/>
</dbReference>
<dbReference type="RefSeq" id="NP_056001.1">
    <molecule id="Q96RL7-2"/>
    <property type="nucleotide sequence ID" value="NM_015186.4"/>
</dbReference>
<dbReference type="RefSeq" id="NP_150648.2">
    <molecule id="Q96RL7-1"/>
    <property type="nucleotide sequence ID" value="NM_033305.3"/>
</dbReference>
<dbReference type="SMR" id="Q96RL7"/>
<dbReference type="BioGRID" id="116835">
    <property type="interactions" value="119"/>
</dbReference>
<dbReference type="FunCoup" id="Q96RL7">
    <property type="interactions" value="1723"/>
</dbReference>
<dbReference type="IntAct" id="Q96RL7">
    <property type="interactions" value="36"/>
</dbReference>
<dbReference type="MINT" id="Q96RL7"/>
<dbReference type="STRING" id="9606.ENSP00000353422"/>
<dbReference type="TCDB" id="1.R.2.1.6">
    <property type="family name" value="the bridge-like lipid transfer protein (bltp) family"/>
</dbReference>
<dbReference type="CarbonylDB" id="Q96RL7"/>
<dbReference type="GlyConnect" id="1889">
    <property type="glycosylation" value="11 N-Linked glycans (1 site)"/>
</dbReference>
<dbReference type="GlyCosmos" id="Q96RL7">
    <property type="glycosylation" value="1 site, 11 glycans"/>
</dbReference>
<dbReference type="GlyGen" id="Q96RL7">
    <property type="glycosylation" value="3 sites, 13 N-linked glycans (2 sites), 1 O-linked glycan (1 site)"/>
</dbReference>
<dbReference type="iPTMnet" id="Q96RL7"/>
<dbReference type="PhosphoSitePlus" id="Q96RL7"/>
<dbReference type="SwissPalm" id="Q96RL7"/>
<dbReference type="BioMuta" id="VPS13A"/>
<dbReference type="DMDM" id="71152975"/>
<dbReference type="jPOST" id="Q96RL7"/>
<dbReference type="MassIVE" id="Q96RL7"/>
<dbReference type="PaxDb" id="9606-ENSP00000353422"/>
<dbReference type="PeptideAtlas" id="Q96RL7"/>
<dbReference type="ProteomicsDB" id="77984">
    <molecule id="Q96RL7-1"/>
</dbReference>
<dbReference type="ProteomicsDB" id="77985">
    <molecule id="Q96RL7-2"/>
</dbReference>
<dbReference type="ProteomicsDB" id="77986">
    <molecule id="Q96RL7-3"/>
</dbReference>
<dbReference type="ProteomicsDB" id="77987">
    <molecule id="Q96RL7-4"/>
</dbReference>
<dbReference type="Pumba" id="Q96RL7"/>
<dbReference type="Antibodypedia" id="12840">
    <property type="antibodies" value="31 antibodies from 14 providers"/>
</dbReference>
<dbReference type="DNASU" id="23230"/>
<dbReference type="Ensembl" id="ENST00000360280.8">
    <molecule id="Q96RL7-1"/>
    <property type="protein sequence ID" value="ENSP00000353422.3"/>
    <property type="gene ID" value="ENSG00000197969.14"/>
</dbReference>
<dbReference type="Ensembl" id="ENST00000376636.7">
    <molecule id="Q96RL7-3"/>
    <property type="protein sequence ID" value="ENSP00000365823.3"/>
    <property type="gene ID" value="ENSG00000197969.14"/>
</dbReference>
<dbReference type="Ensembl" id="ENST00000643348.1">
    <molecule id="Q96RL7-2"/>
    <property type="protein sequence ID" value="ENSP00000493592.1"/>
    <property type="gene ID" value="ENSG00000197969.14"/>
</dbReference>
<dbReference type="Ensembl" id="ENST00000645632.1">
    <molecule id="Q96RL7-4"/>
    <property type="protein sequence ID" value="ENSP00000496361.1"/>
    <property type="gene ID" value="ENSG00000197969.14"/>
</dbReference>
<dbReference type="GeneID" id="23230"/>
<dbReference type="KEGG" id="hsa:23230"/>
<dbReference type="MANE-Select" id="ENST00000360280.8">
    <property type="protein sequence ID" value="ENSP00000353422.3"/>
    <property type="RefSeq nucleotide sequence ID" value="NM_033305.3"/>
    <property type="RefSeq protein sequence ID" value="NP_150648.2"/>
</dbReference>
<dbReference type="UCSC" id="uc004akp.5">
    <molecule id="Q96RL7-1"/>
    <property type="organism name" value="human"/>
</dbReference>
<dbReference type="AGR" id="HGNC:1908"/>
<dbReference type="CTD" id="23230"/>
<dbReference type="DisGeNET" id="23230"/>
<dbReference type="GeneCards" id="VPS13A"/>
<dbReference type="GeneReviews" id="VPS13A"/>
<dbReference type="HGNC" id="HGNC:1908">
    <property type="gene designation" value="VPS13A"/>
</dbReference>
<dbReference type="HPA" id="ENSG00000197969">
    <property type="expression patterns" value="Low tissue specificity"/>
</dbReference>
<dbReference type="MalaCards" id="VPS13A"/>
<dbReference type="MIM" id="200150">
    <property type="type" value="phenotype"/>
</dbReference>
<dbReference type="MIM" id="605978">
    <property type="type" value="gene"/>
</dbReference>
<dbReference type="neXtProt" id="NX_Q96RL7"/>
<dbReference type="OpenTargets" id="ENSG00000197969"/>
<dbReference type="Orphanet" id="2388">
    <property type="disease" value="Choreoacanthocytosis"/>
</dbReference>
<dbReference type="PharmGKB" id="PA26444"/>
<dbReference type="VEuPathDB" id="HostDB:ENSG00000197969"/>
<dbReference type="eggNOG" id="KOG1809">
    <property type="taxonomic scope" value="Eukaryota"/>
</dbReference>
<dbReference type="GeneTree" id="ENSGT00950000183083"/>
<dbReference type="HOGENOM" id="CLU_000135_1_1_1"/>
<dbReference type="InParanoid" id="Q96RL7"/>
<dbReference type="OMA" id="CEWQYTF"/>
<dbReference type="OrthoDB" id="428159at2759"/>
<dbReference type="PAN-GO" id="Q96RL7">
    <property type="GO annotations" value="4 GO annotations based on evolutionary models"/>
</dbReference>
<dbReference type="PhylomeDB" id="Q96RL7"/>
<dbReference type="TreeFam" id="TF300316"/>
<dbReference type="PathwayCommons" id="Q96RL7"/>
<dbReference type="SignaLink" id="Q96RL7"/>
<dbReference type="BioGRID-ORCS" id="23230">
    <property type="hits" value="28 hits in 1162 CRISPR screens"/>
</dbReference>
<dbReference type="ChiTaRS" id="VPS13A">
    <property type="organism name" value="human"/>
</dbReference>
<dbReference type="GeneWiki" id="VPS13A"/>
<dbReference type="GenomeRNAi" id="23230"/>
<dbReference type="Pharos" id="Q96RL7">
    <property type="development level" value="Tbio"/>
</dbReference>
<dbReference type="PRO" id="PR:Q96RL7"/>
<dbReference type="Proteomes" id="UP000005640">
    <property type="component" value="Chromosome 9"/>
</dbReference>
<dbReference type="RNAct" id="Q96RL7">
    <property type="molecule type" value="protein"/>
</dbReference>
<dbReference type="Bgee" id="ENSG00000197969">
    <property type="expression patterns" value="Expressed in jejunal mucosa and 197 other cell types or tissues"/>
</dbReference>
<dbReference type="ExpressionAtlas" id="Q96RL7">
    <property type="expression patterns" value="baseline and differential"/>
</dbReference>
<dbReference type="GO" id="GO:0005829">
    <property type="term" value="C:cytosol"/>
    <property type="evidence" value="ECO:0007669"/>
    <property type="project" value="GOC"/>
</dbReference>
<dbReference type="GO" id="GO:0005789">
    <property type="term" value="C:endoplasmic reticulum membrane"/>
    <property type="evidence" value="ECO:0000314"/>
    <property type="project" value="UniProtKB"/>
</dbReference>
<dbReference type="GO" id="GO:0010008">
    <property type="term" value="C:endosome membrane"/>
    <property type="evidence" value="ECO:0000314"/>
    <property type="project" value="UniProtKB"/>
</dbReference>
<dbReference type="GO" id="GO:0005794">
    <property type="term" value="C:Golgi apparatus"/>
    <property type="evidence" value="ECO:0000250"/>
    <property type="project" value="UniProtKB"/>
</dbReference>
<dbReference type="GO" id="GO:0005811">
    <property type="term" value="C:lipid droplet"/>
    <property type="evidence" value="ECO:0000314"/>
    <property type="project" value="UniProtKB"/>
</dbReference>
<dbReference type="GO" id="GO:0005765">
    <property type="term" value="C:lysosomal membrane"/>
    <property type="evidence" value="ECO:0000314"/>
    <property type="project" value="UniProtKB"/>
</dbReference>
<dbReference type="GO" id="GO:0044233">
    <property type="term" value="C:mitochondria-associated endoplasmic reticulum membrane contact site"/>
    <property type="evidence" value="ECO:0000314"/>
    <property type="project" value="UniProtKB"/>
</dbReference>
<dbReference type="GO" id="GO:0031966">
    <property type="term" value="C:mitochondrial membrane"/>
    <property type="evidence" value="ECO:0000314"/>
    <property type="project" value="UniProtKB"/>
</dbReference>
<dbReference type="GO" id="GO:0005741">
    <property type="term" value="C:mitochondrial outer membrane"/>
    <property type="evidence" value="ECO:0000314"/>
    <property type="project" value="UniProtKB"/>
</dbReference>
<dbReference type="GO" id="GO:0005739">
    <property type="term" value="C:mitochondrion"/>
    <property type="evidence" value="ECO:0000314"/>
    <property type="project" value="HPA"/>
</dbReference>
<dbReference type="GO" id="GO:0043005">
    <property type="term" value="C:neuron projection"/>
    <property type="evidence" value="ECO:0007669"/>
    <property type="project" value="Ensembl"/>
</dbReference>
<dbReference type="GO" id="GO:0043025">
    <property type="term" value="C:neuronal cell body"/>
    <property type="evidence" value="ECO:0007669"/>
    <property type="project" value="Ensembl"/>
</dbReference>
<dbReference type="GO" id="GO:0099013">
    <property type="term" value="C:neuronal dense core vesicle lumen"/>
    <property type="evidence" value="ECO:0000250"/>
    <property type="project" value="UniProtKB"/>
</dbReference>
<dbReference type="GO" id="GO:0097225">
    <property type="term" value="C:sperm midpiece"/>
    <property type="evidence" value="ECO:0007669"/>
    <property type="project" value="Ensembl"/>
</dbReference>
<dbReference type="GO" id="GO:0008344">
    <property type="term" value="P:adult locomotory behavior"/>
    <property type="evidence" value="ECO:0007669"/>
    <property type="project" value="Ensembl"/>
</dbReference>
<dbReference type="GO" id="GO:0006914">
    <property type="term" value="P:autophagy"/>
    <property type="evidence" value="ECO:0000315"/>
    <property type="project" value="dictyBase"/>
</dbReference>
<dbReference type="GO" id="GO:0031547">
    <property type="term" value="P:brain-derived neurotrophic factor receptor signaling pathway"/>
    <property type="evidence" value="ECO:0007669"/>
    <property type="project" value="Ensembl"/>
</dbReference>
<dbReference type="GO" id="GO:0071470">
    <property type="term" value="P:cellular response to osmotic stress"/>
    <property type="evidence" value="ECO:0007669"/>
    <property type="project" value="Ensembl"/>
</dbReference>
<dbReference type="GO" id="GO:0030218">
    <property type="term" value="P:erythrocyte differentiation"/>
    <property type="evidence" value="ECO:0007669"/>
    <property type="project" value="Ensembl"/>
</dbReference>
<dbReference type="GO" id="GO:0035640">
    <property type="term" value="P:exploration behavior"/>
    <property type="evidence" value="ECO:0007669"/>
    <property type="project" value="Ensembl"/>
</dbReference>
<dbReference type="GO" id="GO:0030317">
    <property type="term" value="P:flagellated sperm motility"/>
    <property type="evidence" value="ECO:0007669"/>
    <property type="project" value="Ensembl"/>
</dbReference>
<dbReference type="GO" id="GO:0010467">
    <property type="term" value="P:gene expression"/>
    <property type="evidence" value="ECO:0007669"/>
    <property type="project" value="Ensembl"/>
</dbReference>
<dbReference type="GO" id="GO:0006895">
    <property type="term" value="P:Golgi to endosome transport"/>
    <property type="evidence" value="ECO:0000303"/>
    <property type="project" value="UniProtKB"/>
</dbReference>
<dbReference type="GO" id="GO:0006869">
    <property type="term" value="P:lipid transport"/>
    <property type="evidence" value="ECO:0007669"/>
    <property type="project" value="UniProtKB-KW"/>
</dbReference>
<dbReference type="GO" id="GO:0060292">
    <property type="term" value="P:long-term synaptic depression"/>
    <property type="evidence" value="ECO:0007669"/>
    <property type="project" value="Ensembl"/>
</dbReference>
<dbReference type="GO" id="GO:1905146">
    <property type="term" value="P:lysosomal protein catabolic process"/>
    <property type="evidence" value="ECO:0000315"/>
    <property type="project" value="UniProtKB"/>
</dbReference>
<dbReference type="GO" id="GO:0014004">
    <property type="term" value="P:microglia differentiation"/>
    <property type="evidence" value="ECO:0007669"/>
    <property type="project" value="Ensembl"/>
</dbReference>
<dbReference type="GO" id="GO:0061744">
    <property type="term" value="P:motor behavior"/>
    <property type="evidence" value="ECO:0007669"/>
    <property type="project" value="Ensembl"/>
</dbReference>
<dbReference type="GO" id="GO:0035264">
    <property type="term" value="P:multicellular organism growth"/>
    <property type="evidence" value="ECO:0007669"/>
    <property type="project" value="Ensembl"/>
</dbReference>
<dbReference type="GO" id="GO:0150076">
    <property type="term" value="P:neuroinflammatory response"/>
    <property type="evidence" value="ECO:0007669"/>
    <property type="project" value="Ensembl"/>
</dbReference>
<dbReference type="GO" id="GO:0050885">
    <property type="term" value="P:neuromuscular process controlling balance"/>
    <property type="evidence" value="ECO:0007669"/>
    <property type="project" value="Ensembl"/>
</dbReference>
<dbReference type="GO" id="GO:0140058">
    <property type="term" value="P:neuron projection arborization"/>
    <property type="evidence" value="ECO:0007669"/>
    <property type="project" value="Ensembl"/>
</dbReference>
<dbReference type="GO" id="GO:0008104">
    <property type="term" value="P:protein localization"/>
    <property type="evidence" value="ECO:0000303"/>
    <property type="project" value="UniProtKB"/>
</dbReference>
<dbReference type="GO" id="GO:0045053">
    <property type="term" value="P:protein retention in Golgi apparatus"/>
    <property type="evidence" value="ECO:0000318"/>
    <property type="project" value="GO_Central"/>
</dbReference>
<dbReference type="GO" id="GO:0009306">
    <property type="term" value="P:protein secretion"/>
    <property type="evidence" value="ECO:0007669"/>
    <property type="project" value="Ensembl"/>
</dbReference>
<dbReference type="GO" id="GO:0006623">
    <property type="term" value="P:protein targeting to vacuole"/>
    <property type="evidence" value="ECO:0000318"/>
    <property type="project" value="GO_Central"/>
</dbReference>
<dbReference type="GO" id="GO:0090648">
    <property type="term" value="P:response to environmental enrichment"/>
    <property type="evidence" value="ECO:0007669"/>
    <property type="project" value="Ensembl"/>
</dbReference>
<dbReference type="GO" id="GO:0035176">
    <property type="term" value="P:social behavior"/>
    <property type="evidence" value="ECO:0007669"/>
    <property type="project" value="Ensembl"/>
</dbReference>
<dbReference type="GO" id="GO:0030382">
    <property type="term" value="P:sperm mitochondrion organization"/>
    <property type="evidence" value="ECO:0007669"/>
    <property type="project" value="Ensembl"/>
</dbReference>
<dbReference type="InterPro" id="IPR026847">
    <property type="entry name" value="VPS13"/>
</dbReference>
<dbReference type="InterPro" id="IPR056748">
    <property type="entry name" value="VPS13-like_C"/>
</dbReference>
<dbReference type="InterPro" id="IPR056747">
    <property type="entry name" value="VPS13-like_M"/>
</dbReference>
<dbReference type="InterPro" id="IPR026854">
    <property type="entry name" value="VPS13_N"/>
</dbReference>
<dbReference type="InterPro" id="IPR009543">
    <property type="entry name" value="VPS13_VAB"/>
</dbReference>
<dbReference type="PANTHER" id="PTHR16166:SF22">
    <property type="entry name" value="INTERMEMBRANE LIPID TRANSFER PROTEIN VPS13A"/>
    <property type="match status" value="1"/>
</dbReference>
<dbReference type="PANTHER" id="PTHR16166">
    <property type="entry name" value="VACUOLAR PROTEIN SORTING-ASSOCIATED PROTEIN VPS13"/>
    <property type="match status" value="1"/>
</dbReference>
<dbReference type="Pfam" id="PF25037">
    <property type="entry name" value="VPS13_C"/>
    <property type="match status" value="1"/>
</dbReference>
<dbReference type="Pfam" id="PF25033">
    <property type="entry name" value="VPS13_M"/>
    <property type="match status" value="1"/>
</dbReference>
<dbReference type="Pfam" id="PF12624">
    <property type="entry name" value="VPS13_N"/>
    <property type="match status" value="1"/>
</dbReference>
<dbReference type="Pfam" id="PF25036">
    <property type="entry name" value="VPS13_VAB"/>
    <property type="match status" value="1"/>
</dbReference>
<gene>
    <name type="primary">VPS13A</name>
    <name type="synonym">CHAC</name>
    <name type="synonym">KIAA0986</name>
</gene>
<feature type="chain" id="PRO_0000106277" description="Intermembrane lipid transfer protein VPS13A">
    <location>
        <begin position="1"/>
        <end position="3174"/>
    </location>
</feature>
<feature type="domain" description="Chorein N-terminal" evidence="3">
    <location>
        <begin position="3"/>
        <end position="116"/>
    </location>
</feature>
<feature type="repeat" description="TPR 1">
    <location>
        <begin position="212"/>
        <end position="245"/>
    </location>
</feature>
<feature type="repeat" description="TPR 2">
    <location>
        <begin position="373"/>
        <end position="406"/>
    </location>
</feature>
<feature type="repeat" description="TPR 3">
    <location>
        <begin position="537"/>
        <end position="575"/>
    </location>
</feature>
<feature type="repeat" description="TPR 4">
    <location>
        <begin position="1256"/>
        <end position="1289"/>
    </location>
</feature>
<feature type="repeat" description="TPR 5">
    <location>
        <begin position="1291"/>
        <end position="1320"/>
    </location>
</feature>
<feature type="repeat" description="TPR 6">
    <location>
        <begin position="2009"/>
        <end position="2041"/>
    </location>
</feature>
<feature type="domain" description="SHR-BD" evidence="3">
    <location>
        <begin position="2209"/>
        <end position="2454"/>
    </location>
</feature>
<feature type="repeat" description="TPR 7">
    <location>
        <begin position="2568"/>
        <end position="2601"/>
    </location>
</feature>
<feature type="repeat" description="TPR 8">
    <location>
        <begin position="2717"/>
        <end position="2751"/>
    </location>
</feature>
<feature type="repeat" description="TPR 9">
    <location>
        <begin position="2860"/>
        <end position="2898"/>
    </location>
</feature>
<feature type="repeat" description="TPR 10">
    <location>
        <begin position="3086"/>
        <end position="3119"/>
    </location>
</feature>
<feature type="region of interest" description="Required for mitochondrial localization" evidence="9 11">
    <location>
        <begin position="2751"/>
        <end position="3174"/>
    </location>
</feature>
<feature type="region of interest" description="Required for lipid droplet localization" evidence="9">
    <location>
        <begin position="2953"/>
        <end position="3027"/>
    </location>
</feature>
<feature type="short sequence motif" description="FFAT" evidence="11">
    <location>
        <begin position="842"/>
        <end position="848"/>
    </location>
</feature>
<feature type="modified residue" description="Phosphoserine" evidence="2">
    <location>
        <position position="839"/>
    </location>
</feature>
<feature type="modified residue" description="Phosphoserine" evidence="23">
    <location>
        <position position="1416"/>
    </location>
</feature>
<feature type="splice variant" id="VSP_014904" description="In isoform 3." evidence="20">
    <location>
        <begin position="1040"/>
        <end position="1078"/>
    </location>
</feature>
<feature type="splice variant" id="VSP_006550" description="In isoform 2." evidence="16 18 19">
    <original>VMENGRFAKYKYFTHVMINKTDMLMITRRGVLFVTKGTFGQLTCEWQYSFDEFTKEPFIVHGRRLRIEAKERVKSVFHAREFGKIINFKTPEDARWILTKLQEAREPSPSL</original>
    <variation>KIQFYREWIMTHSSSSDDDDDDDDDDESDLNH</variation>
    <location>
        <begin position="3064"/>
        <end position="3174"/>
    </location>
</feature>
<feature type="splice variant" id="VSP_014905" description="In isoform 4." evidence="20">
    <original>VMENGR</original>
    <variation>ASKSLI</variation>
    <location>
        <begin position="3064"/>
        <end position="3069"/>
    </location>
</feature>
<feature type="splice variant" id="VSP_014906" description="In isoform 4." evidence="20">
    <location>
        <begin position="3070"/>
        <end position="3174"/>
    </location>
</feature>
<feature type="sequence variant" id="VAR_086164" description="In CHAC." evidence="8">
    <original>L</original>
    <variation>P</variation>
    <location>
        <position position="67"/>
    </location>
</feature>
<feature type="sequence variant" id="VAR_038420" description="In CHAC; disrupts subcellular localization with protein XK on lipid droplets.; dbSNP:rs119477052." evidence="4 14">
    <original>I</original>
    <variation>K</variation>
    <location>
        <position position="90"/>
    </location>
</feature>
<feature type="sequence variant" id="VAR_036324" description="In a colorectal cancer sample; somatic mutation." evidence="7">
    <original>R</original>
    <variation>H</variation>
    <location>
        <position position="161"/>
    </location>
</feature>
<feature type="sequence variant" id="VAR_086165" description="In CHAC; dbSNP:rs119477053." evidence="8">
    <location>
        <begin position="208"/>
        <end position="3174"/>
    </location>
</feature>
<feature type="sequence variant" id="VAR_086166" description="In CHAC; dbSNP:rs771004767." evidence="13">
    <location>
        <begin position="267"/>
        <end position="3174"/>
    </location>
</feature>
<feature type="sequence variant" id="VAR_086167" description="In CHAC." evidence="8">
    <location>
        <begin position="310"/>
        <end position="3174"/>
    </location>
</feature>
<feature type="sequence variant" id="VAR_086168" description="In CHAC; dbSNP:rs761923202." evidence="8">
    <location>
        <begin position="435"/>
        <end position="3174"/>
    </location>
</feature>
<feature type="sequence variant" id="VAR_058114" evidence="5">
    <original>F</original>
    <variation>L</variation>
    <location>
        <position position="565"/>
    </location>
</feature>
<feature type="sequence variant" id="VAR_086169" description="In CHAC." evidence="8">
    <location>
        <begin position="712"/>
        <end position="3174"/>
    </location>
</feature>
<feature type="sequence variant" id="VAR_086170" description="In CHAC; dbSNP:rs771943305." evidence="8">
    <location>
        <begin position="731"/>
        <end position="3174"/>
    </location>
</feature>
<feature type="sequence variant" id="VAR_086171" description="In CHAC." evidence="13">
    <location>
        <begin position="845"/>
        <end position="3174"/>
    </location>
</feature>
<feature type="sequence variant" id="VAR_086172" description="In CHAC; dbSNP:rs766404788." evidence="13">
    <location>
        <begin position="865"/>
        <end position="3174"/>
    </location>
</feature>
<feature type="sequence variant" id="VAR_058115" description="In dbSNP:rs78048112." evidence="5">
    <original>V</original>
    <variation>A</variation>
    <location>
        <position position="898"/>
    </location>
</feature>
<feature type="sequence variant" id="VAR_058116" description="In CHAC." evidence="5">
    <original>A</original>
    <variation>P</variation>
    <location>
        <position position="1095"/>
    </location>
</feature>
<feature type="sequence variant" id="VAR_086173" description="In CHAC." evidence="13">
    <location>
        <begin position="1188"/>
        <end position="3174"/>
    </location>
</feature>
<feature type="sequence variant" id="VAR_086174" description="In CHAC; dbSNP:rs200280742." evidence="8">
    <location>
        <begin position="1297"/>
        <end position="3174"/>
    </location>
</feature>
<feature type="sequence variant" id="VAR_086175" description="In CHAC." evidence="8">
    <location>
        <begin position="1332"/>
        <end position="3174"/>
    </location>
</feature>
<feature type="sequence variant" id="VAR_012803" description="In CHAC." evidence="4">
    <original>S</original>
    <variation>P</variation>
    <location>
        <position position="1452"/>
    </location>
</feature>
<feature type="sequence variant" id="VAR_086176" description="In CHAC; dbSNP:rs1193250444." evidence="8 13">
    <location>
        <begin position="1471"/>
        <end position="3174"/>
    </location>
</feature>
<feature type="sequence variant" id="VAR_058117" description="In dbSNP:rs76077278." evidence="5">
    <original>R</original>
    <variation>K</variation>
    <location>
        <position position="1490"/>
    </location>
</feature>
<feature type="sequence variant" id="VAR_058118" description="In dbSNP:rs149840356." evidence="5">
    <original>Y</original>
    <variation>C</variation>
    <location>
        <position position="1587"/>
    </location>
</feature>
<feature type="sequence variant" id="VAR_086177" description="In CHAC; dbSNP:rs1369905878." evidence="8">
    <location>
        <begin position="1921"/>
        <end position="3174"/>
    </location>
</feature>
<feature type="sequence variant" id="VAR_086178" description="In CHAC." evidence="13">
    <location>
        <begin position="1961"/>
        <end position="3174"/>
    </location>
</feature>
<feature type="sequence variant" id="VAR_058119" description="In dbSNP:rs41289969." evidence="5">
    <original>V</original>
    <variation>I</variation>
    <location>
        <position position="1973"/>
    </location>
</feature>
<feature type="sequence variant" id="VAR_086179" description="In CHAC." evidence="8">
    <location>
        <begin position="2033"/>
        <end position="3174"/>
    </location>
</feature>
<feature type="sequence variant" id="VAR_058120" description="In CHAC; abolishes association with lipid droplets and disrupts subcellular localization with protein XK on lipid droplets.; dbSNP:rs1400127478." evidence="5 14">
    <original>W</original>
    <variation>R</variation>
    <location>
        <position position="2460"/>
    </location>
</feature>
<feature type="sequence variant" id="VAR_086180" description="In CHAC." evidence="8">
    <location>
        <begin position="2471"/>
        <end position="3174"/>
    </location>
</feature>
<feature type="sequence variant" id="VAR_058121" description="In dbSNP:rs141138349." evidence="5">
    <original>I</original>
    <variation>T</variation>
    <location>
        <position position="2486"/>
    </location>
</feature>
<feature type="sequence variant" id="VAR_086181" description="In CHAC; dbSNP:rs1055609567." evidence="8">
    <location>
        <begin position="2623"/>
        <end position="3174"/>
    </location>
</feature>
<feature type="sequence variant" id="VAR_038421" description="In CHAC; dbSNP:rs781395681." evidence="4">
    <original>Y</original>
    <variation>C</variation>
    <location>
        <position position="2721"/>
    </location>
</feature>
<feature type="sequence variant" id="VAR_086182" description="In CHAC; dbSNP:rs199807227." evidence="8">
    <location>
        <begin position="3037"/>
        <end position="3174"/>
    </location>
</feature>
<feature type="sequence variant" id="VAR_086183" description="In CHAC; dbSNP:rs148173878." evidence="8">
    <location>
        <begin position="3135"/>
        <end position="3174"/>
    </location>
</feature>
<feature type="sequence variant" id="VAR_058122" description="In dbSNP:rs75740713." evidence="5">
    <original>P</original>
    <variation>L</variation>
    <location>
        <position position="3172"/>
    </location>
</feature>
<feature type="mutagenesis site" description="Reduced interaction with VAPA." evidence="11">
    <original>E</original>
    <variation>A</variation>
    <location>
        <position position="842"/>
    </location>
</feature>
<feature type="mutagenesis site" description="Abnormal localization to the cytosol." evidence="9">
    <original>FF</original>
    <variation>LI</variation>
    <location>
        <begin position="843"/>
        <end position="844"/>
    </location>
</feature>
<feature type="sequence conflict" description="In Ref. 1; AAK61861." evidence="22" ref="1">
    <original>K</original>
    <variation>R</variation>
    <location>
        <position position="1198"/>
    </location>
</feature>
<feature type="sequence conflict" description="In Ref. 6; AAH41852." evidence="22" ref="6">
    <original>L</original>
    <variation>R</variation>
    <location>
        <position position="1850"/>
    </location>
</feature>
<feature type="sequence conflict" description="In Ref. 6; AAH41852." evidence="22" ref="6">
    <original>I</original>
    <variation>F</variation>
    <location>
        <position position="1880"/>
    </location>
</feature>
<feature type="sequence conflict" description="In Ref. 7; BAB14337." evidence="22" ref="7">
    <original>G</original>
    <variation>E</variation>
    <location>
        <position position="2281"/>
    </location>
</feature>
<feature type="sequence conflict" description="In Ref. 6; AAH41852." evidence="22" ref="6">
    <original>K</original>
    <variation>R</variation>
    <location>
        <position position="2354"/>
    </location>
</feature>
<feature type="sequence conflict" description="In Ref. 7; BAB14337." evidence="22" ref="7">
    <original>T</original>
    <variation>R</variation>
    <location>
        <position position="2413"/>
    </location>
</feature>
<feature type="sequence conflict" description="In Ref. 7; BAB14337." evidence="22" ref="7">
    <original>K</original>
    <variation>E</variation>
    <location>
        <position position="2567"/>
    </location>
</feature>
<comment type="function">
    <text evidence="1 10 11 15">Mediates the transfer of lipids between membranes at organelle contact sites (By similarity). Binds phospholipids (PubMed:34830155). Required for the formation or stabilization of ER-mitochondria contact sites which enable transfer of lipids between the ER and mitochondria (PubMed:30741634). Negatively regulates lipid droplet size and motility (PubMed:30741634). Required for efficient lysosomal protein degradation (PubMed:30709847).</text>
</comment>
<comment type="subunit">
    <text evidence="10 11 12 14 15">Interacts (via FFAT motif) with VAPA and VAPB (PubMed:30741634). Interacts with RAB7A (PubMed:30709847). Interacts with XK (PubMed:31086825, PubMed:32845802).</text>
</comment>
<comment type="interaction">
    <interactant intactId="EBI-1752583">
        <id>Q96RL7</id>
    </interactant>
    <interactant intactId="EBI-389883">
        <id>P16333</id>
        <label>NCK1</label>
    </interactant>
    <organismsDiffer>false</organismsDiffer>
    <experiments>3</experiments>
</comment>
<comment type="subcellular location">
    <subcellularLocation>
        <location evidence="9 10 11">Mitochondrion outer membrane</location>
        <topology evidence="11">Peripheral membrane protein</topology>
    </subcellularLocation>
    <subcellularLocation>
        <location evidence="10 11 14">Endoplasmic reticulum membrane</location>
        <topology evidence="11">Peripheral membrane protein</topology>
    </subcellularLocation>
    <subcellularLocation>
        <location evidence="10">Endosome membrane</location>
        <topology evidence="22">Peripheral membrane protein</topology>
    </subcellularLocation>
    <subcellularLocation>
        <location evidence="10">Lysosome membrane</location>
        <topology evidence="22">Peripheral membrane protein</topology>
    </subcellularLocation>
    <subcellularLocation>
        <location evidence="9 10 11 14">Lipid droplet</location>
    </subcellularLocation>
    <subcellularLocation>
        <location evidence="2">Golgi apparatus</location>
    </subcellularLocation>
    <subcellularLocation>
        <location evidence="2">Cytoplasmic vesicle</location>
        <location evidence="2">Secretory vesicle</location>
        <location evidence="2">Neuronal dense core vesicle</location>
    </subcellularLocation>
    <text evidence="9 10 11">Localizes at mitochondria-endosomes and mitochondria-endoplasmic reticulum contact sites (PubMed:30093493, PubMed:30709847, PubMed:30741634).</text>
</comment>
<comment type="alternative products">
    <event type="alternative splicing"/>
    <isoform>
        <id>Q96RL7-1</id>
        <name>1</name>
        <name>A</name>
        <sequence type="displayed"/>
    </isoform>
    <isoform>
        <id>Q96RL7-2</id>
        <name>2</name>
        <name>B</name>
        <sequence type="described" ref="VSP_006550"/>
    </isoform>
    <isoform>
        <id>Q96RL7-3</id>
        <name>3</name>
        <name>Chorein 2A</name>
        <sequence type="described" ref="VSP_014904"/>
    </isoform>
    <isoform>
        <id>Q96RL7-4</id>
        <name>4</name>
        <name>Chorein 1D</name>
        <sequence type="described" ref="VSP_014905 VSP_014906"/>
    </isoform>
</comment>
<comment type="tissue specificity">
    <text evidence="6 12">Expressed in red blood cells (at protein level) (PubMed:31086825). Widely expressed, with high expression in brain, heart, skeletal muscle and kidney (PubMed:15498460).</text>
</comment>
<comment type="domain">
    <text evidence="15">The C-terminal part (3058-3174) is involved in phospholipid binding, including phosphatidylinositol 4,5-bisphosphate.</text>
</comment>
<comment type="domain">
    <text evidence="9 11">The FFAT motif is required for interaction with VAPA and VAPB and its localization to the endoplasmic reticulum.</text>
</comment>
<comment type="disease" evidence="4 5 8 13 14">
    <disease id="DI-01344">
        <name>Choreoacanthocytosis</name>
        <acronym>CHAC</acronym>
        <description>An autosomal recessive neurodegenerative disorder characterized by the gradual onset of hyperkinetic movements and abnormal erythrocyte morphology. Basal ganglia atrophy in the brain is a pathological feature of the disease. Other clinical symptoms include psychiatric features, epilepsy, peripheral neuropathy, myopathy and oral self-mutilation.</description>
        <dbReference type="MIM" id="200150"/>
    </disease>
    <text>The disease is caused by variants affecting the gene represented in this entry.</text>
</comment>
<comment type="similarity">
    <text evidence="22">Belongs to the VPS13 family.</text>
</comment>
<comment type="sequence caution" evidence="22">
    <conflict type="miscellaneous discrepancy">
        <sequence resource="EMBL-CDS" id="AAH20576"/>
    </conflict>
    <text>Intron retention.</text>
</comment>
<sequence length="3174" mass="360276">MVFESVVVDVLNRFLGDYVVDLDTSQLSLGIWKGAVALKNLQIKENALSQLDVPFKVKVGHIGNLKLIIPWKNLYTQPVEAVLEEIYLLIVPSSRIKYDPLKEEKQLMEAKQQELKRIEEAKQKVVDQEQHLPEKQDTFAEKLVTQIIKNLQVKISSIHIRYEDDITNRDKPLSFGISLQNLSMQTTDQYWVPCLHDETEKLVRKLIRLDNLFAYWNVKSQMFYLSDYDNSLDDLKNGIVNENIVPEGYDFVFRPISANAKLVMNRRSDFDFSAPKINLEIELHNIAIEFNKPQYFSIMELLESVDMMAQNLPYRKFKPDVPLHHHAREWWAYAIHGVLEVNVCPRLWMWSWKHIRKHRQKVKQYKELYKKKLTSKKPPGELLVSLEELEKTLDVFNITIARQTAEVEVKKAGYKIYKEGVKDPEDNKGWFSWLWSWSEQNTNEQQPDVQPETLEEMLTPEEKALLYEAIGYSETAVDPTLLKTFEALKFFVHLKSMSIVLRENHQKPELVDIVIEEFSTLIVQRPGAQAIKFETKIDSFHITGLPDNSEKPRLLSSLDDAMSLFQITFEINPLDETVSQRCIIEAEPLEIIYDARTVNSIVEFFRPPKEVHLAQLTAATLTKLEEFRSKTATGLLYIIETQKVLDLKINLKASYIIVPQDGIFSPTSNLLLLDLGHLKVTSKSRSELPDVKQGEANLKEIMDRAYDSFDIQLTSVQLLYSRVGDNWREARKLSVSTQHILVPMHFNLELSKAMVFMDVRMPKFKIYGKLPLISLRISDKKLQGIMELIESIPKPEPVTEVSAPVKSFQIQTSTSLGTSQISQKIIPLLELPSVSEDDSEEEFFDAPCSPLEEPLQFPTGVKSIRTRKLQKQDCSVNMTTFKIRFEVPKVLIEFYHLVGDCELSVVEILVLGLGAEIEIRTYDLKANAFLKEFCLKCPEYLDENKKPVYLVTTLDNTMEDLLTLEYVKAEKNVPDLKSTYNNVLQLIKVNFSSLDIHLHTEALLNTINYLHNILPQSEEKSAPVSTTETEDKGDVIKKLALKLSTNEDIITLQILAELSCLQIFIQDQKCNISEIKIEGLDSEMIMRPSETEINAKLRNIIVLDSDITAIYKKAVYITGKEVFSFKMVSYMDATAGSAYTDMNVVDIQVNLIVGCIEVVFVTKFLYSILAFIDNFQAAKQALAEATVQAAGMAATGVKELAQRSSRMALDINIKAPVVVIPQSPVSENVFVADFGLITMTNTFHMITESQSSPPPVIDLITIKLSEMRLYRSRFINDAYQEVLDLLLPLNLEVVVERNLCWEWYQEVPCFNVNAQLKPMEFILSQEDITTIFKTLHGNIWYEKDGSASPAVTKDQYSATSGVTTNASHHSGGATVVTAAVVEVHSRALLVKTTLNISFKTDDLTMVLYSPGPKQASFTDVRDPSLKLAEFKLENIISTLKMYTDGSTFSSFSLKNCILDDKRPHVKKATPRMIGLTVGFDKKDMMDIKYRKVRDGCVTDAVFQEMYICASVEFLQTVANVFLEAYTTGTAVETSVQTWTAKEEVPTQESVKWEINVIIKNPEIVFVADMTKNDAPALVITTQCEICYKGNLENSTMTAAIKDLQVRACPFLPVKRKGKITTVLQPCDLFYQTTQKGTDPQVIDMSVKSLTLKVSPVIINTMITITSALYTTKETIPEETASSTAHLWEKKDTKTLKMWFLEESNETEKIAPTTELVPKGEMIKMNIDSIFIVLEAGIGHRTVPMLLAKSRFSGEGKNWSSLINLHCQLELEVHYYNEMFGVWEPLLEPLEIDQTEDFRPWNLGIKMKKKAKMAIVESDPEEENYKVPEYKTVISFHSKDQLNITLSKCGLVMLNNLVKAFTEAATGSSADFVKDLAPFMILNSLGLTISVSPSDSFSVLNIPMAKSYVLKNGESLSMDYIRTKDNDHFNAMTSLSSKLFFILLTPVNHSTADKIPLTKVGRRLYTVRHRESGVERSIVCQIDTVEGSKKVTIRSPVQIRNHFSVPLSVYEGDTLLGTASPENEFNIPLGSYRSFIFLKPEDENYQMCEGIDFEEIIKNDGALLKKKCRSKNPSKESFLINIVPEKDNLTSLSVYSEDGWDLPYIMHLWPPILLRNLLPYKIAYYIEGIENSVFTLSEGHSAQICTAQLGKARLHLKLLDYLNHDWKSEYHIKPNQQDISFVSFTCVTEMEKTDLDIAVHMTYNTGQTVVAFHSPYWMVNKTGRMLQYKADGIHRKHPPNYKKPVLFSFQPNHFFNNNKVQLMVTDSELSNQFSIDTVGSHGAVKCKGLKMDYQVGVTIDLSSFNITRIVTFTPFYMIKNKSKYHISVAEEGNDKWLSLDLEQCIPFWPEYASSKLLIQVERSEDPPKRIYFNKQENCILLRLDNELGGIIAEVNLAEHSTVITFLDYHDGAATFLLINHTKNELVQYNQSSLSEIEDSLPPGKAVFYTWADPVGSRRLKWRCRKSHGEVTQKDDMMMPIDLGEKTIYLVSFFEGLQRIILFTEDPRVFKVTYESEKAELAEQEIAVALQDVGISLVNNYTKQEVAYIGITSSDVVWETKPKKKARWKPMSVKHTEKLEREFKEYTESSPSEDKVIQLDTNVPVRLTPTGHNMKILQPHVIALRRNYLPALKVEYNTSAHQSSFRIQIYRIQIQNQIHGAVFPFVFYPVKPPKSVTMDSAPKPFTDVSIVMRSAGHSQISRIKYFKVLIQEMDLRLDLGFIYALTDLMTEAEVTENTEVELFHKDIEAFKEEYKTASLVDQSQVSLYEYFHISPIKLHLSVSLSSGREEAKDSKQNGGLIPVHSLNLLLKSIGATLTDVQDVVFKLAFFELNYQFHTTSDLQSEVIRHYSKQAIKQMYVLILGLDVLGNPFGLIREFSEGVEAFFYEPYQGAIQGPEEFVEGMALGLKALVGGAVGGLAGAASKITGAMAKGVAAMTMDEDYQQKRREAMNKQPAGFREGITRGGKGLVSGFVSGITGIVTKPIKGAQKGGAAGFFKGVGKGLVGAVARPTGGIIDMASSTFQGIKRATETSEVESLRPPRFFNEDGVIRPYRLRDGTGNQMLQVMENGRFAKYKYFTHVMINKTDMLMITRRGVLFVTKGTFGQLTCEWQYSFDEFTKEPFIVHGRRLRIEAKERVKSVFHAREFGKIINFKTPEDARWILTKLQEAREPSPSL</sequence>
<protein>
    <recommendedName>
        <fullName evidence="21">Intermembrane lipid transfer protein VPS13A</fullName>
    </recommendedName>
    <alternativeName>
        <fullName evidence="17">Chorea-acanthocytosis protein</fullName>
    </alternativeName>
    <alternativeName>
        <fullName evidence="18">Chorein</fullName>
    </alternativeName>
    <alternativeName>
        <fullName evidence="22">Vacuolar protein sorting-associated protein 13A</fullName>
    </alternativeName>
</protein>
<organism>
    <name type="scientific">Homo sapiens</name>
    <name type="common">Human</name>
    <dbReference type="NCBI Taxonomy" id="9606"/>
    <lineage>
        <taxon>Eukaryota</taxon>
        <taxon>Metazoa</taxon>
        <taxon>Chordata</taxon>
        <taxon>Craniata</taxon>
        <taxon>Vertebrata</taxon>
        <taxon>Euteleostomi</taxon>
        <taxon>Mammalia</taxon>
        <taxon>Eutheria</taxon>
        <taxon>Euarchontoglires</taxon>
        <taxon>Primates</taxon>
        <taxon>Haplorrhini</taxon>
        <taxon>Catarrhini</taxon>
        <taxon>Hominidae</taxon>
        <taxon>Homo</taxon>
    </lineage>
</organism>
<accession>Q96RL7</accession>
<accession>Q5JSX9</accession>
<accession>Q5JSY0</accession>
<accession>Q5VYR5</accession>
<accession>Q702P4</accession>
<accession>Q709D0</accession>
<accession>Q86YF8</accession>
<accession>Q96S61</accession>
<accession>Q9H995</accession>
<accession>Q9Y2J1</accession>
<name>VP13A_HUMAN</name>
<proteinExistence type="evidence at protein level"/>
<keyword id="KW-0025">Alternative splicing</keyword>
<keyword id="KW-0968">Cytoplasmic vesicle</keyword>
<keyword id="KW-0225">Disease variant</keyword>
<keyword id="KW-0256">Endoplasmic reticulum</keyword>
<keyword id="KW-0967">Endosome</keyword>
<keyword id="KW-0887">Epilepsy</keyword>
<keyword id="KW-0333">Golgi apparatus</keyword>
<keyword id="KW-0551">Lipid droplet</keyword>
<keyword id="KW-0445">Lipid transport</keyword>
<keyword id="KW-0458">Lysosome</keyword>
<keyword id="KW-0472">Membrane</keyword>
<keyword id="KW-0496">Mitochondrion</keyword>
<keyword id="KW-1000">Mitochondrion outer membrane</keyword>
<keyword id="KW-0523">Neurodegeneration</keyword>
<keyword id="KW-0597">Phosphoprotein</keyword>
<keyword id="KW-1267">Proteomics identification</keyword>
<keyword id="KW-1185">Reference proteome</keyword>
<keyword id="KW-0677">Repeat</keyword>
<keyword id="KW-0802">TPR repeat</keyword>
<keyword id="KW-0813">Transport</keyword>
<reference key="1">
    <citation type="journal article" date="2001" name="Nat. Genet.">
        <title>A conserved sorting-associated protein is mutant in chorea-acanthocytosis.</title>
        <authorList>
            <person name="Rampoldi L."/>
            <person name="Dobson-Stone C."/>
            <person name="Rubio J."/>
            <person name="Danek A."/>
            <person name="Chalmers R."/>
            <person name="Wood N.W."/>
            <person name="Verellen C."/>
            <person name="Ferrer X."/>
            <person name="Malandrini A."/>
            <person name="Fabrizi G.M."/>
            <person name="Brown R."/>
            <person name="Vance J."/>
            <person name="Pericak-Vance M."/>
            <person name="Rudolf G."/>
            <person name="Carre S."/>
            <person name="Alonso E."/>
            <person name="Manfredi M."/>
            <person name="Nemeth A.H."/>
            <person name="Monaco A.P."/>
        </authorList>
    </citation>
    <scope>NUCLEOTIDE SEQUENCE [MRNA]</scope>
    <scope>ALTERNATIVE SPLICING</scope>
    <scope>VARIANTS CHAC LYS-90; PRO-1452 AND CYS-2721</scope>
</reference>
<reference key="2">
    <citation type="journal article" date="2001" name="Nat. Genet.">
        <title>The gene encoding a newly discovered protein, chorein, is mutated in chorea-acanthocytosis.</title>
        <authorList>
            <person name="Ueno S."/>
            <person name="Maruki Y."/>
            <person name="Nakamura M."/>
            <person name="Tomemori Y."/>
            <person name="Kamae K."/>
            <person name="Tanabe H."/>
            <person name="Yamashita Y."/>
            <person name="Matsuda S."/>
            <person name="Kaneko S."/>
            <person name="Sano A."/>
        </authorList>
    </citation>
    <scope>NUCLEOTIDE SEQUENCE [MRNA] (ISOFORM 2)</scope>
</reference>
<reference key="3">
    <citation type="journal article" date="2004" name="Genomics">
        <title>Analysis of the human VPS13 gene family.</title>
        <authorList>
            <person name="Velayos-Baeza A."/>
            <person name="Vettori A."/>
            <person name="Copley R.R."/>
            <person name="Dobson-Stone C."/>
            <person name="Monaco A.P."/>
        </authorList>
    </citation>
    <scope>NUCLEOTIDE SEQUENCE [MRNA] (ISOFORMS 3 AND 4)</scope>
    <scope>TISSUE SPECIFICITY</scope>
    <source>
        <tissue>Lymphoblast</tissue>
    </source>
</reference>
<reference key="4">
    <citation type="journal article" date="2004" name="Nature">
        <title>DNA sequence and analysis of human chromosome 9.</title>
        <authorList>
            <person name="Humphray S.J."/>
            <person name="Oliver K."/>
            <person name="Hunt A.R."/>
            <person name="Plumb R.W."/>
            <person name="Loveland J.E."/>
            <person name="Howe K.L."/>
            <person name="Andrews T.D."/>
            <person name="Searle S."/>
            <person name="Hunt S.E."/>
            <person name="Scott C.E."/>
            <person name="Jones M.C."/>
            <person name="Ainscough R."/>
            <person name="Almeida J.P."/>
            <person name="Ambrose K.D."/>
            <person name="Ashwell R.I.S."/>
            <person name="Babbage A.K."/>
            <person name="Babbage S."/>
            <person name="Bagguley C.L."/>
            <person name="Bailey J."/>
            <person name="Banerjee R."/>
            <person name="Barker D.J."/>
            <person name="Barlow K.F."/>
            <person name="Bates K."/>
            <person name="Beasley H."/>
            <person name="Beasley O."/>
            <person name="Bird C.P."/>
            <person name="Bray-Allen S."/>
            <person name="Brown A.J."/>
            <person name="Brown J.Y."/>
            <person name="Burford D."/>
            <person name="Burrill W."/>
            <person name="Burton J."/>
            <person name="Carder C."/>
            <person name="Carter N.P."/>
            <person name="Chapman J.C."/>
            <person name="Chen Y."/>
            <person name="Clarke G."/>
            <person name="Clark S.Y."/>
            <person name="Clee C.M."/>
            <person name="Clegg S."/>
            <person name="Collier R.E."/>
            <person name="Corby N."/>
            <person name="Crosier M."/>
            <person name="Cummings A.T."/>
            <person name="Davies J."/>
            <person name="Dhami P."/>
            <person name="Dunn M."/>
            <person name="Dutta I."/>
            <person name="Dyer L.W."/>
            <person name="Earthrowl M.E."/>
            <person name="Faulkner L."/>
            <person name="Fleming C.J."/>
            <person name="Frankish A."/>
            <person name="Frankland J.A."/>
            <person name="French L."/>
            <person name="Fricker D.G."/>
            <person name="Garner P."/>
            <person name="Garnett J."/>
            <person name="Ghori J."/>
            <person name="Gilbert J.G.R."/>
            <person name="Glison C."/>
            <person name="Grafham D.V."/>
            <person name="Gribble S."/>
            <person name="Griffiths C."/>
            <person name="Griffiths-Jones S."/>
            <person name="Grocock R."/>
            <person name="Guy J."/>
            <person name="Hall R.E."/>
            <person name="Hammond S."/>
            <person name="Harley J.L."/>
            <person name="Harrison E.S.I."/>
            <person name="Hart E.A."/>
            <person name="Heath P.D."/>
            <person name="Henderson C.D."/>
            <person name="Hopkins B.L."/>
            <person name="Howard P.J."/>
            <person name="Howden P.J."/>
            <person name="Huckle E."/>
            <person name="Johnson C."/>
            <person name="Johnson D."/>
            <person name="Joy A.A."/>
            <person name="Kay M."/>
            <person name="Keenan S."/>
            <person name="Kershaw J.K."/>
            <person name="Kimberley A.M."/>
            <person name="King A."/>
            <person name="Knights A."/>
            <person name="Laird G.K."/>
            <person name="Langford C."/>
            <person name="Lawlor S."/>
            <person name="Leongamornlert D.A."/>
            <person name="Leversha M."/>
            <person name="Lloyd C."/>
            <person name="Lloyd D.M."/>
            <person name="Lovell J."/>
            <person name="Martin S."/>
            <person name="Mashreghi-Mohammadi M."/>
            <person name="Matthews L."/>
            <person name="McLaren S."/>
            <person name="McLay K.E."/>
            <person name="McMurray A."/>
            <person name="Milne S."/>
            <person name="Nickerson T."/>
            <person name="Nisbett J."/>
            <person name="Nordsiek G."/>
            <person name="Pearce A.V."/>
            <person name="Peck A.I."/>
            <person name="Porter K.M."/>
            <person name="Pandian R."/>
            <person name="Pelan S."/>
            <person name="Phillimore B."/>
            <person name="Povey S."/>
            <person name="Ramsey Y."/>
            <person name="Rand V."/>
            <person name="Scharfe M."/>
            <person name="Sehra H.K."/>
            <person name="Shownkeen R."/>
            <person name="Sims S.K."/>
            <person name="Skuce C.D."/>
            <person name="Smith M."/>
            <person name="Steward C.A."/>
            <person name="Swarbreck D."/>
            <person name="Sycamore N."/>
            <person name="Tester J."/>
            <person name="Thorpe A."/>
            <person name="Tracey A."/>
            <person name="Tromans A."/>
            <person name="Thomas D.W."/>
            <person name="Wall M."/>
            <person name="Wallis J.M."/>
            <person name="West A.P."/>
            <person name="Whitehead S.L."/>
            <person name="Willey D.L."/>
            <person name="Williams S.A."/>
            <person name="Wilming L."/>
            <person name="Wray P.W."/>
            <person name="Young L."/>
            <person name="Ashurst J.L."/>
            <person name="Coulson A."/>
            <person name="Blocker H."/>
            <person name="Durbin R.M."/>
            <person name="Sulston J.E."/>
            <person name="Hubbard T."/>
            <person name="Jackson M.J."/>
            <person name="Bentley D.R."/>
            <person name="Beck S."/>
            <person name="Rogers J."/>
            <person name="Dunham I."/>
        </authorList>
    </citation>
    <scope>NUCLEOTIDE SEQUENCE [LARGE SCALE GENOMIC DNA]</scope>
</reference>
<reference key="5">
    <citation type="journal article" date="1999" name="DNA Res.">
        <title>Prediction of the coding sequences of unidentified human genes. XIII. The complete sequences of 100 new cDNA clones from brain which code for large proteins in vitro.</title>
        <authorList>
            <person name="Nagase T."/>
            <person name="Ishikawa K."/>
            <person name="Suyama M."/>
            <person name="Kikuno R."/>
            <person name="Hirosawa M."/>
            <person name="Miyajima N."/>
            <person name="Tanaka A."/>
            <person name="Kotani H."/>
            <person name="Nomura N."/>
            <person name="Ohara O."/>
        </authorList>
    </citation>
    <scope>NUCLEOTIDE SEQUENCE [LARGE SCALE MRNA] OF 1638-3174 (ISOFORM 2)</scope>
    <source>
        <tissue>Brain</tissue>
    </source>
</reference>
<reference key="6">
    <citation type="journal article" date="2004" name="Genome Res.">
        <title>The status, quality, and expansion of the NIH full-length cDNA project: the Mammalian Gene Collection (MGC).</title>
        <authorList>
            <consortium name="The MGC Project Team"/>
        </authorList>
    </citation>
    <scope>NUCLEOTIDE SEQUENCE [LARGE SCALE MRNA] OF 1749-2127</scope>
    <scope>NUCLEOTIDE SEQUENCE [LARGE SCALE MRNA] OF 1850-3174 (ISOFORM 2)</scope>
    <source>
        <tissue>Placenta</tissue>
        <tissue>Testis</tissue>
    </source>
</reference>
<reference key="7">
    <citation type="journal article" date="2004" name="Nat. Genet.">
        <title>Complete sequencing and characterization of 21,243 full-length human cDNAs.</title>
        <authorList>
            <person name="Ota T."/>
            <person name="Suzuki Y."/>
            <person name="Nishikawa T."/>
            <person name="Otsuki T."/>
            <person name="Sugiyama T."/>
            <person name="Irie R."/>
            <person name="Wakamatsu A."/>
            <person name="Hayashi K."/>
            <person name="Sato H."/>
            <person name="Nagai K."/>
            <person name="Kimura K."/>
            <person name="Makita H."/>
            <person name="Sekine M."/>
            <person name="Obayashi M."/>
            <person name="Nishi T."/>
            <person name="Shibahara T."/>
            <person name="Tanaka T."/>
            <person name="Ishii S."/>
            <person name="Yamamoto J."/>
            <person name="Saito K."/>
            <person name="Kawai Y."/>
            <person name="Isono Y."/>
            <person name="Nakamura Y."/>
            <person name="Nagahari K."/>
            <person name="Murakami K."/>
            <person name="Yasuda T."/>
            <person name="Iwayanagi T."/>
            <person name="Wagatsuma M."/>
            <person name="Shiratori A."/>
            <person name="Sudo H."/>
            <person name="Hosoiri T."/>
            <person name="Kaku Y."/>
            <person name="Kodaira H."/>
            <person name="Kondo H."/>
            <person name="Sugawara M."/>
            <person name="Takahashi M."/>
            <person name="Kanda K."/>
            <person name="Yokoi T."/>
            <person name="Furuya T."/>
            <person name="Kikkawa E."/>
            <person name="Omura Y."/>
            <person name="Abe K."/>
            <person name="Kamihara K."/>
            <person name="Katsuta N."/>
            <person name="Sato K."/>
            <person name="Tanikawa M."/>
            <person name="Yamazaki M."/>
            <person name="Ninomiya K."/>
            <person name="Ishibashi T."/>
            <person name="Yamashita H."/>
            <person name="Murakawa K."/>
            <person name="Fujimori K."/>
            <person name="Tanai H."/>
            <person name="Kimata M."/>
            <person name="Watanabe M."/>
            <person name="Hiraoka S."/>
            <person name="Chiba Y."/>
            <person name="Ishida S."/>
            <person name="Ono Y."/>
            <person name="Takiguchi S."/>
            <person name="Watanabe S."/>
            <person name="Yosida M."/>
            <person name="Hotuta T."/>
            <person name="Kusano J."/>
            <person name="Kanehori K."/>
            <person name="Takahashi-Fujii A."/>
            <person name="Hara H."/>
            <person name="Tanase T.-O."/>
            <person name="Nomura Y."/>
            <person name="Togiya S."/>
            <person name="Komai F."/>
            <person name="Hara R."/>
            <person name="Takeuchi K."/>
            <person name="Arita M."/>
            <person name="Imose N."/>
            <person name="Musashino K."/>
            <person name="Yuuki H."/>
            <person name="Oshima A."/>
            <person name="Sasaki N."/>
            <person name="Aotsuka S."/>
            <person name="Yoshikawa Y."/>
            <person name="Matsunawa H."/>
            <person name="Ichihara T."/>
            <person name="Shiohata N."/>
            <person name="Sano S."/>
            <person name="Moriya S."/>
            <person name="Momiyama H."/>
            <person name="Satoh N."/>
            <person name="Takami S."/>
            <person name="Terashima Y."/>
            <person name="Suzuki O."/>
            <person name="Nakagawa S."/>
            <person name="Senoh A."/>
            <person name="Mizoguchi H."/>
            <person name="Goto Y."/>
            <person name="Shimizu F."/>
            <person name="Wakebe H."/>
            <person name="Hishigaki H."/>
            <person name="Watanabe T."/>
            <person name="Sugiyama A."/>
            <person name="Takemoto M."/>
            <person name="Kawakami B."/>
            <person name="Yamazaki M."/>
            <person name="Watanabe K."/>
            <person name="Kumagai A."/>
            <person name="Itakura S."/>
            <person name="Fukuzumi Y."/>
            <person name="Fujimori Y."/>
            <person name="Komiyama M."/>
            <person name="Tashiro H."/>
            <person name="Tanigami A."/>
            <person name="Fujiwara T."/>
            <person name="Ono T."/>
            <person name="Yamada K."/>
            <person name="Fujii Y."/>
            <person name="Ozaki K."/>
            <person name="Hirao M."/>
            <person name="Ohmori Y."/>
            <person name="Kawabata A."/>
            <person name="Hikiji T."/>
            <person name="Kobatake N."/>
            <person name="Inagaki H."/>
            <person name="Ikema Y."/>
            <person name="Okamoto S."/>
            <person name="Okitani R."/>
            <person name="Kawakami T."/>
            <person name="Noguchi S."/>
            <person name="Itoh T."/>
            <person name="Shigeta K."/>
            <person name="Senba T."/>
            <person name="Matsumura K."/>
            <person name="Nakajima Y."/>
            <person name="Mizuno T."/>
            <person name="Morinaga M."/>
            <person name="Sasaki M."/>
            <person name="Togashi T."/>
            <person name="Oyama M."/>
            <person name="Hata H."/>
            <person name="Watanabe M."/>
            <person name="Komatsu T."/>
            <person name="Mizushima-Sugano J."/>
            <person name="Satoh T."/>
            <person name="Shirai Y."/>
            <person name="Takahashi Y."/>
            <person name="Nakagawa K."/>
            <person name="Okumura K."/>
            <person name="Nagase T."/>
            <person name="Nomura N."/>
            <person name="Kikuchi H."/>
            <person name="Masuho Y."/>
            <person name="Yamashita R."/>
            <person name="Nakai K."/>
            <person name="Yada T."/>
            <person name="Nakamura Y."/>
            <person name="Ohara O."/>
            <person name="Isogai T."/>
            <person name="Sugano S."/>
        </authorList>
    </citation>
    <scope>NUCLEOTIDE SEQUENCE [LARGE SCALE MRNA] OF 2200-3174</scope>
    <source>
        <tissue>Teratocarcinoma</tissue>
    </source>
</reference>
<reference key="8">
    <citation type="journal article" date="2008" name="Proc. Natl. Acad. Sci. U.S.A.">
        <title>A quantitative atlas of mitotic phosphorylation.</title>
        <authorList>
            <person name="Dephoure N."/>
            <person name="Zhou C."/>
            <person name="Villen J."/>
            <person name="Beausoleil S.A."/>
            <person name="Bakalarski C.E."/>
            <person name="Elledge S.J."/>
            <person name="Gygi S.P."/>
        </authorList>
    </citation>
    <scope>IDENTIFICATION BY MASS SPECTROMETRY [LARGE SCALE ANALYSIS]</scope>
    <source>
        <tissue>Cervix carcinoma</tissue>
    </source>
</reference>
<reference key="9">
    <citation type="journal article" date="2013" name="J. Proteome Res.">
        <title>Toward a comprehensive characterization of a human cancer cell phosphoproteome.</title>
        <authorList>
            <person name="Zhou H."/>
            <person name="Di Palma S."/>
            <person name="Preisinger C."/>
            <person name="Peng M."/>
            <person name="Polat A.N."/>
            <person name="Heck A.J."/>
            <person name="Mohammed S."/>
        </authorList>
    </citation>
    <scope>PHOSPHORYLATION [LARGE SCALE ANALYSIS] AT SER-1416</scope>
    <scope>IDENTIFICATION BY MASS SPECTROMETRY [LARGE SCALE ANALYSIS]</scope>
    <source>
        <tissue>Erythroleukemia</tissue>
    </source>
</reference>
<reference key="10">
    <citation type="journal article" date="2014" name="J. Proteomics">
        <title>An enzyme assisted RP-RPLC approach for in-depth analysis of human liver phosphoproteome.</title>
        <authorList>
            <person name="Bian Y."/>
            <person name="Song C."/>
            <person name="Cheng K."/>
            <person name="Dong M."/>
            <person name="Wang F."/>
            <person name="Huang J."/>
            <person name="Sun D."/>
            <person name="Wang L."/>
            <person name="Ye M."/>
            <person name="Zou H."/>
        </authorList>
    </citation>
    <scope>IDENTIFICATION BY MASS SPECTROMETRY [LARGE SCALE ANALYSIS]</scope>
    <source>
        <tissue>Liver</tissue>
    </source>
</reference>
<reference key="11">
    <citation type="journal article" date="2018" name="J. Cell Biol.">
        <title>VPS13A and VPS13C are lipid transport proteins differentially localized at ER contact sites.</title>
        <authorList>
            <person name="Kumar N."/>
            <person name="Leonzino M."/>
            <person name="Hancock-Cerutti W."/>
            <person name="Horenkamp F.A."/>
            <person name="Li P."/>
            <person name="Lees J.A."/>
            <person name="Wheeler H."/>
            <person name="Reinisch K.M."/>
            <person name="De Camilli P."/>
        </authorList>
    </citation>
    <scope>SUBCELLULAR LOCATION</scope>
    <scope>DOMAIN FFAT MOTIF</scope>
    <scope>MUTAGENESIS OF 843-PHE-PHE-844</scope>
</reference>
<reference key="12">
    <citation type="journal article" date="2019" name="Dis. Model. Mech.">
        <title>VPS13A is closely associated with mitochondria and is required for efficient lysosomal degradation.</title>
        <authorList>
            <person name="Munoz-Braceras S."/>
            <person name="Tornero-Ecija A.R."/>
            <person name="Vincent O."/>
            <person name="Escalante R."/>
        </authorList>
    </citation>
    <scope>FUNCTION</scope>
    <scope>SUBCELLULAR LOCATION</scope>
    <scope>INTERACTION WITH RAB7A</scope>
</reference>
<reference key="13">
    <citation type="journal article" date="2019" name="Elife">
        <title>Human VPS13A is associated with multiple organelles and influences mitochondrial morphology and lipid droplet motility.</title>
        <authorList>
            <person name="Yeshaw W.M."/>
            <person name="van der Zwaag M."/>
            <person name="Pinto F."/>
            <person name="Lahaye L.L."/>
            <person name="Faber A.I."/>
            <person name="Gomez-Sanchez R."/>
            <person name="Dolga A.M."/>
            <person name="Poland C."/>
            <person name="Monaco A.P."/>
            <person name="van Ijzendoorn S.C."/>
            <person name="Grzeschik N.A."/>
            <person name="Velayos-Baeza A."/>
            <person name="Sibon O.C."/>
        </authorList>
    </citation>
    <scope>FUNCTION</scope>
    <scope>SUBCELLULAR LOCATION</scope>
    <scope>INTERACTION WITH VAPA AND VAPB</scope>
    <scope>DOMAIN FFAT MOTIF</scope>
    <scope>MUTAGENESIS OF GLU-842</scope>
</reference>
<reference key="14">
    <citation type="journal article" date="2019" name="Neurol. Genet.">
        <title>Novel pathogenic XK mutations in McLeod syndrome and interaction between XK protein and chorein.</title>
        <authorList>
            <person name="Urata Y."/>
            <person name="Nakamura M."/>
            <person name="Sasaki N."/>
            <person name="Shiokawa N."/>
            <person name="Nishida Y."/>
            <person name="Arai K."/>
            <person name="Hiwatashi H."/>
            <person name="Yokoyama I."/>
            <person name="Narumi S."/>
            <person name="Terayama Y."/>
            <person name="Murakami T."/>
            <person name="Ugawa Y."/>
            <person name="Sakamoto H."/>
            <person name="Kaneko S."/>
            <person name="Nakazawa Y."/>
            <person name="Yamasaki R."/>
            <person name="Sadashima S."/>
            <person name="Sakai T."/>
            <person name="Arai H."/>
            <person name="Sano A."/>
        </authorList>
    </citation>
    <scope>INTERACTION WITH XK</scope>
    <scope>TISSUE SPECIFICITY</scope>
</reference>
<reference key="15">
    <citation type="journal article" date="2021" name="Int. J. Mol. Sci.">
        <title>The GTPase Arf1 Is a Determinant of Yeast Vps13 Localization to the Golgi Apparatus.</title>
        <authorList>
            <person name="Kolakowski D."/>
            <person name="Rzepnikowska W."/>
            <person name="Kaniak-Golik A."/>
            <person name="Zoladek T."/>
            <person name="Kaminska J."/>
        </authorList>
    </citation>
    <scope>FUNCTION</scope>
    <scope>DOMAIN C-TERMINAL PART</scope>
</reference>
<reference key="16">
    <citation type="journal article" date="2002" name="Eur. J. Hum. Genet.">
        <title>Mutational spectrum of the CHAC gene in patients with chorea-acanthocytosis.</title>
        <authorList>
            <person name="Dobson-Stone C."/>
            <person name="Danek A."/>
            <person name="Rampoldi L."/>
            <person name="Hardie R.J."/>
            <person name="Chalmers R.M."/>
            <person name="Wood N.W."/>
            <person name="Bohlega S."/>
            <person name="Dotti M.T."/>
            <person name="Federico A."/>
            <person name="Shizuka M."/>
            <person name="Tanaka M."/>
            <person name="Watanabe M."/>
            <person name="Ikeda Y."/>
            <person name="Brin M."/>
            <person name="Goldfarb L.G."/>
            <person name="Karp B.I."/>
            <person name="Mohiddin S."/>
            <person name="Fananapazir L."/>
            <person name="Storch A."/>
            <person name="Fryer A.E."/>
            <person name="Maddison P."/>
            <person name="Sibon I."/>
            <person name="Trevisol-Bittencourt P.C."/>
            <person name="Singer C."/>
            <person name="Caballero I.R."/>
            <person name="Aasly J.O."/>
            <person name="Schmierer K."/>
            <person name="Dengler R."/>
            <person name="Hiersemenzel L.-P."/>
            <person name="Zeviani M."/>
            <person name="Meiner V."/>
            <person name="Lossos A."/>
            <person name="Johnson S."/>
            <person name="Mercado F.C."/>
            <person name="Sorrentino G."/>
            <person name="Dupre N."/>
            <person name="Rouleau G.A."/>
            <person name="Volkmann J."/>
            <person name="Arpa J."/>
            <person name="Lees A."/>
            <person name="Geraud G."/>
            <person name="Chouinard S."/>
            <person name="Nemeth A."/>
            <person name="Monaco A.P."/>
        </authorList>
    </citation>
    <scope>VARIANTS CHAC PRO-1095 AND ARG-2460</scope>
    <scope>VARIANTS LEU-565; ALA-898; LYS-1490; CYS-1587; ILE-1973; THR-2486 AND LEU-3172</scope>
</reference>
<reference key="17">
    <citation type="journal article" date="2006" name="Science">
        <title>The consensus coding sequences of human breast and colorectal cancers.</title>
        <authorList>
            <person name="Sjoeblom T."/>
            <person name="Jones S."/>
            <person name="Wood L.D."/>
            <person name="Parsons D.W."/>
            <person name="Lin J."/>
            <person name="Barber T.D."/>
            <person name="Mandelker D."/>
            <person name="Leary R.J."/>
            <person name="Ptak J."/>
            <person name="Silliman N."/>
            <person name="Szabo S."/>
            <person name="Buckhaults P."/>
            <person name="Farrell C."/>
            <person name="Meeh P."/>
            <person name="Markowitz S.D."/>
            <person name="Willis J."/>
            <person name="Dawson D."/>
            <person name="Willson J.K.V."/>
            <person name="Gazdar A.F."/>
            <person name="Hartigan J."/>
            <person name="Wu L."/>
            <person name="Liu C."/>
            <person name="Parmigiani G."/>
            <person name="Park B.H."/>
            <person name="Bachman K.E."/>
            <person name="Papadopoulos N."/>
            <person name="Vogelstein B."/>
            <person name="Kinzler K.W."/>
            <person name="Velculescu V.E."/>
        </authorList>
    </citation>
    <scope>VARIANT [LARGE SCALE ANALYSIS] HIS-161</scope>
</reference>
<reference key="18">
    <citation type="journal article" date="2011" name="Am. J. Med. Genet. B Neuropsychiatr. Genet.">
        <title>Novel pathogenic mutations and copy number variations in the VPS13A gene in patients with chorea-acanthocytosis.</title>
        <authorList>
            <person name="Tomiyasu A."/>
            <person name="Nakamura M."/>
            <person name="Ichiba M."/>
            <person name="Ueno S."/>
            <person name="Saiki S."/>
            <person name="Morimoto M."/>
            <person name="Kobal J."/>
            <person name="Kageyama Y."/>
            <person name="Inui T."/>
            <person name="Wakabayashi K."/>
            <person name="Yamada T."/>
            <person name="Kanemori Y."/>
            <person name="Jung H.H."/>
            <person name="Tanaka H."/>
            <person name="Orimo S."/>
            <person name="Afawi Z."/>
            <person name="Blatt I."/>
            <person name="Aasly J."/>
            <person name="Ujike H."/>
            <person name="Babovic-Vuksanovic D."/>
            <person name="Josephs K.A."/>
            <person name="Tohge R."/>
            <person name="Rodrigues G.R."/>
            <person name="Dupre N."/>
            <person name="Yamada H."/>
            <person name="Yokochi F."/>
            <person name="Kotschet K."/>
            <person name="Takei T."/>
            <person name="Rudzinska M."/>
            <person name="Szczudlik A."/>
            <person name="Penco S."/>
            <person name="Fujiwara M."/>
            <person name="Tojo K."/>
            <person name="Sano A."/>
        </authorList>
    </citation>
    <scope>VARIANTS CHAC PRO-67; 208-ARG--LEU-3174 DEL; 310-GLN--LEU-3174 DEL; 435-TRP--LEU-3174 DEL; 712-GLN--LEU-3174 DEL; 731-ARG--LEU-3174 DEL; 1297-ARG--LEU-3174 DEL; 1332-PHE--LEU-3174 DEL; 1471-ARG--LEU-3174 DEL; 1921-ARG--LEU-3174 DEL; 2033-SER--LEU-3174 DEL; 2471-GLN--LEU-3174 DEL; 2623-ARG--LEU-3174 DEL; 3037-ARG--LEU-3174 DEL AND 3135-ARG--LEU-3174 DEL</scope>
</reference>
<reference key="19">
    <citation type="journal article" date="2019" name="Neurol. Genet.">
        <title>Novel pathogenic VPS13A gene mutations in Japanese patients with chorea-acanthocytosis.</title>
        <authorList>
            <person name="Nishida Y."/>
            <person name="Nakamura M."/>
            <person name="Urata Y."/>
            <person name="Kasamo K."/>
            <person name="Hiwatashi H."/>
            <person name="Yokoyama I."/>
            <person name="Mizobuchi M."/>
            <person name="Sakurai K."/>
            <person name="Osaki Y."/>
            <person name="Morita Y."/>
            <person name="Watanabe M."/>
            <person name="Yoshida K."/>
            <person name="Yamane K."/>
            <person name="Miyakoshi N."/>
            <person name="Okiyama R."/>
            <person name="Ueda T."/>
            <person name="Wakasugi N."/>
            <person name="Saitoh Y."/>
            <person name="Sakamoto T."/>
            <person name="Takahashi Y."/>
            <person name="Shibano K."/>
            <person name="Tokuoka H."/>
            <person name="Hara A."/>
            <person name="Monma K."/>
            <person name="Ogata K."/>
            <person name="Kakuda K."/>
            <person name="Mochizuki H."/>
            <person name="Arai T."/>
            <person name="Araki M."/>
            <person name="Fujii T."/>
            <person name="Tsukita K."/>
            <person name="Sakamaki-Tsukita H."/>
            <person name="Sano A."/>
        </authorList>
    </citation>
    <scope>VARIANTS CHAC 267-ARG--LEU-3174 DEL; 845-ASP--LEU-3174 DEL; 865-ARG--LEU-3174 DEL; 1188-GLN--LEU-3174 DEL; 1471-ARG--LEU-3174 DEL AND 1961-ARG--LEU-3174 DEL</scope>
</reference>
<reference key="20">
    <citation type="journal article" date="2020" name="Mol. Biol. Cell">
        <title>XK is a partner for VPS13A: a molecular link between Chorea-Acanthocytosis and McLeod Syndrome.</title>
        <authorList>
            <person name="Park J.S."/>
            <person name="Neiman A.M."/>
        </authorList>
    </citation>
    <scope>CHARACTERIZATION OF VARIANTS CHAC LYS-90 AND ARG-2460</scope>
    <scope>INTERACTION WITH XK</scope>
    <scope>SUBCELLULAR LOCATION</scope>
</reference>